<sequence>MTNMRKTHPLFKIINHSFIDLPAPSNISSWWNFGSLLGICLMVQIITGLFLAMHYTSDTLTAFSSVTHICRDVNYGWLIRYMHANGASMFFICLFLHVGRGLYYGSYTFMETWNIGVLLLFAVMATAFMGYVLPWGQMSFWGATVITNLLSAIPYIGTTLVEWIWGGFSVDKATLTRFFAFHFILPFIIAALAIVHLLFLHETGSNNPTGLNSDADKIPFHPYYTIKDILGILIMFLLLMTLVLFFPDMLGDPDNYMPANPLNTPPHIKPEWYFLFAYAILRSIPNKLGGVLALILSILILALMPFLHTSKQRSLMFRPITQILYWILVANLLILTWIGGQPVEHPFIIIGQLASISYFSIILILMPISGIIEDKMLKLYP</sequence>
<accession>Q8WA47</accession>
<feature type="chain" id="PRO_0000061222" description="Cytochrome b">
    <location>
        <begin position="1"/>
        <end position="381"/>
    </location>
</feature>
<feature type="transmembrane region" description="Helical" evidence="2">
    <location>
        <begin position="33"/>
        <end position="53"/>
    </location>
</feature>
<feature type="transmembrane region" description="Helical" evidence="2">
    <location>
        <begin position="77"/>
        <end position="98"/>
    </location>
</feature>
<feature type="transmembrane region" description="Helical" evidence="2">
    <location>
        <begin position="113"/>
        <end position="133"/>
    </location>
</feature>
<feature type="transmembrane region" description="Helical" evidence="2">
    <location>
        <begin position="178"/>
        <end position="198"/>
    </location>
</feature>
<feature type="transmembrane region" description="Helical" evidence="2">
    <location>
        <begin position="226"/>
        <end position="246"/>
    </location>
</feature>
<feature type="transmembrane region" description="Helical" evidence="2">
    <location>
        <begin position="288"/>
        <end position="308"/>
    </location>
</feature>
<feature type="transmembrane region" description="Helical" evidence="2">
    <location>
        <begin position="320"/>
        <end position="340"/>
    </location>
</feature>
<feature type="transmembrane region" description="Helical" evidence="2">
    <location>
        <begin position="347"/>
        <end position="367"/>
    </location>
</feature>
<feature type="binding site" description="axial binding residue" evidence="2">
    <location>
        <position position="83"/>
    </location>
    <ligand>
        <name>heme b</name>
        <dbReference type="ChEBI" id="CHEBI:60344"/>
        <label>b562</label>
    </ligand>
    <ligandPart>
        <name>Fe</name>
        <dbReference type="ChEBI" id="CHEBI:18248"/>
    </ligandPart>
</feature>
<feature type="binding site" description="axial binding residue" evidence="2">
    <location>
        <position position="97"/>
    </location>
    <ligand>
        <name>heme b</name>
        <dbReference type="ChEBI" id="CHEBI:60344"/>
        <label>b566</label>
    </ligand>
    <ligandPart>
        <name>Fe</name>
        <dbReference type="ChEBI" id="CHEBI:18248"/>
    </ligandPart>
</feature>
<feature type="binding site" description="axial binding residue" evidence="2">
    <location>
        <position position="182"/>
    </location>
    <ligand>
        <name>heme b</name>
        <dbReference type="ChEBI" id="CHEBI:60344"/>
        <label>b562</label>
    </ligand>
    <ligandPart>
        <name>Fe</name>
        <dbReference type="ChEBI" id="CHEBI:18248"/>
    </ligandPart>
</feature>
<feature type="binding site" description="axial binding residue" evidence="2">
    <location>
        <position position="196"/>
    </location>
    <ligand>
        <name>heme b</name>
        <dbReference type="ChEBI" id="CHEBI:60344"/>
        <label>b566</label>
    </ligand>
    <ligandPart>
        <name>Fe</name>
        <dbReference type="ChEBI" id="CHEBI:18248"/>
    </ligandPart>
</feature>
<feature type="binding site" evidence="2">
    <location>
        <position position="201"/>
    </location>
    <ligand>
        <name>a ubiquinone</name>
        <dbReference type="ChEBI" id="CHEBI:16389"/>
    </ligand>
</feature>
<comment type="function">
    <text evidence="2">Component of the ubiquinol-cytochrome c reductase complex (complex III or cytochrome b-c1 complex) that is part of the mitochondrial respiratory chain. The b-c1 complex mediates electron transfer from ubiquinol to cytochrome c. Contributes to the generation of a proton gradient across the mitochondrial membrane that is then used for ATP synthesis.</text>
</comment>
<comment type="cofactor">
    <cofactor evidence="2">
        <name>heme b</name>
        <dbReference type="ChEBI" id="CHEBI:60344"/>
    </cofactor>
    <text evidence="2">Binds 2 heme b groups non-covalently.</text>
</comment>
<comment type="subunit">
    <text evidence="2">The cytochrome bc1 complex contains 11 subunits: 3 respiratory subunits (MT-CYB, CYC1 and UQCRFS1), 2 core proteins (UQCRC1 and UQCRC2) and 6 low-molecular weight proteins (UQCRH/QCR6, UQCRB/QCR7, UQCRQ/QCR8, UQCR10/QCR9, UQCR11/QCR10 and a cleavage product of UQCRFS1). This cytochrome bc1 complex then forms a dimer.</text>
</comment>
<comment type="subcellular location">
    <subcellularLocation>
        <location evidence="2">Mitochondrion inner membrane</location>
        <topology evidence="2">Multi-pass membrane protein</topology>
    </subcellularLocation>
</comment>
<comment type="miscellaneous">
    <text evidence="1">Heme 1 (or BL or b562) is low-potential and absorbs at about 562 nm, and heme 2 (or BH or b566) is high-potential and absorbs at about 566 nm.</text>
</comment>
<comment type="similarity">
    <text evidence="3 4">Belongs to the cytochrome b family.</text>
</comment>
<comment type="caution">
    <text evidence="2">The full-length protein contains only eight transmembrane helices, not nine as predicted by bioinformatics tools.</text>
</comment>
<organism>
    <name type="scientific">Mus macedonicus</name>
    <name type="common">Macedonian mouse</name>
    <dbReference type="NCBI Taxonomy" id="10100"/>
    <lineage>
        <taxon>Eukaryota</taxon>
        <taxon>Metazoa</taxon>
        <taxon>Chordata</taxon>
        <taxon>Craniata</taxon>
        <taxon>Vertebrata</taxon>
        <taxon>Euteleostomi</taxon>
        <taxon>Mammalia</taxon>
        <taxon>Eutheria</taxon>
        <taxon>Euarchontoglires</taxon>
        <taxon>Glires</taxon>
        <taxon>Rodentia</taxon>
        <taxon>Myomorpha</taxon>
        <taxon>Muroidea</taxon>
        <taxon>Muridae</taxon>
        <taxon>Murinae</taxon>
        <taxon>Mus</taxon>
        <taxon>Mus</taxon>
    </lineage>
</organism>
<evidence type="ECO:0000250" key="1"/>
<evidence type="ECO:0000250" key="2">
    <source>
        <dbReference type="UniProtKB" id="P00157"/>
    </source>
</evidence>
<evidence type="ECO:0000255" key="3">
    <source>
        <dbReference type="PROSITE-ProRule" id="PRU00967"/>
    </source>
</evidence>
<evidence type="ECO:0000255" key="4">
    <source>
        <dbReference type="PROSITE-ProRule" id="PRU00968"/>
    </source>
</evidence>
<gene>
    <name type="primary">Mt-Cyb</name>
    <name type="synonym">Cob</name>
    <name type="synonym">Cytb</name>
    <name type="synonym">mt-Cytb</name>
    <name type="synonym">Mtcyb</name>
</gene>
<protein>
    <recommendedName>
        <fullName>Cytochrome b</fullName>
    </recommendedName>
    <alternativeName>
        <fullName>Complex III subunit 3</fullName>
    </alternativeName>
    <alternativeName>
        <fullName>Complex III subunit III</fullName>
    </alternativeName>
    <alternativeName>
        <fullName>Cytochrome b-c1 complex subunit 3</fullName>
    </alternativeName>
    <alternativeName>
        <fullName>Ubiquinol-cytochrome-c reductase complex cytochrome b subunit</fullName>
    </alternativeName>
</protein>
<keyword id="KW-0249">Electron transport</keyword>
<keyword id="KW-0349">Heme</keyword>
<keyword id="KW-0408">Iron</keyword>
<keyword id="KW-0472">Membrane</keyword>
<keyword id="KW-0479">Metal-binding</keyword>
<keyword id="KW-0496">Mitochondrion</keyword>
<keyword id="KW-0999">Mitochondrion inner membrane</keyword>
<keyword id="KW-0679">Respiratory chain</keyword>
<keyword id="KW-0812">Transmembrane</keyword>
<keyword id="KW-1133">Transmembrane helix</keyword>
<keyword id="KW-0813">Transport</keyword>
<keyword id="KW-0830">Ubiquinone</keyword>
<geneLocation type="mitochondrion"/>
<name>CYB_MUSMA</name>
<proteinExistence type="inferred from homology"/>
<dbReference type="EMBL" id="AY057808">
    <property type="protein sequence ID" value="AAL23818.1"/>
    <property type="molecule type" value="Genomic_DNA"/>
</dbReference>
<dbReference type="SMR" id="Q8WA47"/>
<dbReference type="GO" id="GO:0005743">
    <property type="term" value="C:mitochondrial inner membrane"/>
    <property type="evidence" value="ECO:0007669"/>
    <property type="project" value="UniProtKB-SubCell"/>
</dbReference>
<dbReference type="GO" id="GO:0045275">
    <property type="term" value="C:respiratory chain complex III"/>
    <property type="evidence" value="ECO:0007669"/>
    <property type="project" value="InterPro"/>
</dbReference>
<dbReference type="GO" id="GO:0046872">
    <property type="term" value="F:metal ion binding"/>
    <property type="evidence" value="ECO:0007669"/>
    <property type="project" value="UniProtKB-KW"/>
</dbReference>
<dbReference type="GO" id="GO:0008121">
    <property type="term" value="F:ubiquinol-cytochrome-c reductase activity"/>
    <property type="evidence" value="ECO:0007669"/>
    <property type="project" value="InterPro"/>
</dbReference>
<dbReference type="GO" id="GO:0006122">
    <property type="term" value="P:mitochondrial electron transport, ubiquinol to cytochrome c"/>
    <property type="evidence" value="ECO:0007669"/>
    <property type="project" value="TreeGrafter"/>
</dbReference>
<dbReference type="CDD" id="cd00290">
    <property type="entry name" value="cytochrome_b_C"/>
    <property type="match status" value="1"/>
</dbReference>
<dbReference type="CDD" id="cd00284">
    <property type="entry name" value="Cytochrome_b_N"/>
    <property type="match status" value="1"/>
</dbReference>
<dbReference type="FunFam" id="1.20.810.10:FF:000002">
    <property type="entry name" value="Cytochrome b"/>
    <property type="match status" value="1"/>
</dbReference>
<dbReference type="Gene3D" id="1.20.810.10">
    <property type="entry name" value="Cytochrome Bc1 Complex, Chain C"/>
    <property type="match status" value="1"/>
</dbReference>
<dbReference type="InterPro" id="IPR005798">
    <property type="entry name" value="Cyt_b/b6_C"/>
</dbReference>
<dbReference type="InterPro" id="IPR036150">
    <property type="entry name" value="Cyt_b/b6_C_sf"/>
</dbReference>
<dbReference type="InterPro" id="IPR005797">
    <property type="entry name" value="Cyt_b/b6_N"/>
</dbReference>
<dbReference type="InterPro" id="IPR027387">
    <property type="entry name" value="Cytb/b6-like_sf"/>
</dbReference>
<dbReference type="InterPro" id="IPR030689">
    <property type="entry name" value="Cytochrome_b"/>
</dbReference>
<dbReference type="InterPro" id="IPR048260">
    <property type="entry name" value="Cytochrome_b_C_euk/bac"/>
</dbReference>
<dbReference type="InterPro" id="IPR048259">
    <property type="entry name" value="Cytochrome_b_N_euk/bac"/>
</dbReference>
<dbReference type="InterPro" id="IPR016174">
    <property type="entry name" value="Di-haem_cyt_TM"/>
</dbReference>
<dbReference type="PANTHER" id="PTHR19271">
    <property type="entry name" value="CYTOCHROME B"/>
    <property type="match status" value="1"/>
</dbReference>
<dbReference type="PANTHER" id="PTHR19271:SF16">
    <property type="entry name" value="CYTOCHROME B"/>
    <property type="match status" value="1"/>
</dbReference>
<dbReference type="Pfam" id="PF00032">
    <property type="entry name" value="Cytochrom_B_C"/>
    <property type="match status" value="1"/>
</dbReference>
<dbReference type="Pfam" id="PF00033">
    <property type="entry name" value="Cytochrome_B"/>
    <property type="match status" value="1"/>
</dbReference>
<dbReference type="PIRSF" id="PIRSF038885">
    <property type="entry name" value="COB"/>
    <property type="match status" value="1"/>
</dbReference>
<dbReference type="SUPFAM" id="SSF81648">
    <property type="entry name" value="a domain/subunit of cytochrome bc1 complex (Ubiquinol-cytochrome c reductase)"/>
    <property type="match status" value="1"/>
</dbReference>
<dbReference type="SUPFAM" id="SSF81342">
    <property type="entry name" value="Transmembrane di-heme cytochromes"/>
    <property type="match status" value="1"/>
</dbReference>
<dbReference type="PROSITE" id="PS51003">
    <property type="entry name" value="CYTB_CTER"/>
    <property type="match status" value="1"/>
</dbReference>
<dbReference type="PROSITE" id="PS51002">
    <property type="entry name" value="CYTB_NTER"/>
    <property type="match status" value="1"/>
</dbReference>
<reference key="1">
    <citation type="journal article" date="2002" name="Syst. Biol.">
        <title>Phylogenetic relationships in the genus mus, based on paternally, maternally, and biparentally inherited characters.</title>
        <authorList>
            <person name="Lundrigan B.L."/>
            <person name="Jansa S.A."/>
            <person name="Tucker P.K."/>
        </authorList>
    </citation>
    <scope>NUCLEOTIDE SEQUENCE [GENOMIC DNA]</scope>
</reference>